<feature type="chain" id="PRO_0000357869" description="NADH-quinone oxidoreductase subunit D">
    <location>
        <begin position="1"/>
        <end position="418"/>
    </location>
</feature>
<comment type="function">
    <text evidence="1">NDH-1 shuttles electrons from NADH, via FMN and iron-sulfur (Fe-S) centers, to quinones in the respiratory chain. The immediate electron acceptor for the enzyme in this species is believed to be ubiquinone. Couples the redox reaction to proton translocation (for every two electrons transferred, four hydrogen ions are translocated across the cytoplasmic membrane), and thus conserves the redox energy in a proton gradient.</text>
</comment>
<comment type="catalytic activity">
    <reaction evidence="1">
        <text>a quinone + NADH + 5 H(+)(in) = a quinol + NAD(+) + 4 H(+)(out)</text>
        <dbReference type="Rhea" id="RHEA:57888"/>
        <dbReference type="ChEBI" id="CHEBI:15378"/>
        <dbReference type="ChEBI" id="CHEBI:24646"/>
        <dbReference type="ChEBI" id="CHEBI:57540"/>
        <dbReference type="ChEBI" id="CHEBI:57945"/>
        <dbReference type="ChEBI" id="CHEBI:132124"/>
    </reaction>
</comment>
<comment type="subunit">
    <text evidence="1">NDH-1 is composed of 14 different subunits. Subunits NuoB, C, D, E, F, and G constitute the peripheral sector of the complex.</text>
</comment>
<comment type="subcellular location">
    <subcellularLocation>
        <location evidence="1">Cell inner membrane</location>
        <topology evidence="1">Peripheral membrane protein</topology>
        <orientation evidence="1">Cytoplasmic side</orientation>
    </subcellularLocation>
</comment>
<comment type="similarity">
    <text evidence="1">Belongs to the complex I 49 kDa subunit family.</text>
</comment>
<dbReference type="EC" id="7.1.1.-" evidence="1"/>
<dbReference type="EMBL" id="CP000381">
    <property type="protein sequence ID" value="ABX74033.1"/>
    <property type="molecule type" value="Genomic_DNA"/>
</dbReference>
<dbReference type="RefSeq" id="WP_012222084.1">
    <property type="nucleotide sequence ID" value="NC_010120.1"/>
</dbReference>
<dbReference type="SMR" id="A9M3D9"/>
<dbReference type="KEGG" id="nmn:NMCC_1902"/>
<dbReference type="HOGENOM" id="CLU_015134_1_1_4"/>
<dbReference type="Proteomes" id="UP000001177">
    <property type="component" value="Chromosome"/>
</dbReference>
<dbReference type="GO" id="GO:0005886">
    <property type="term" value="C:plasma membrane"/>
    <property type="evidence" value="ECO:0007669"/>
    <property type="project" value="UniProtKB-SubCell"/>
</dbReference>
<dbReference type="GO" id="GO:0051287">
    <property type="term" value="F:NAD binding"/>
    <property type="evidence" value="ECO:0007669"/>
    <property type="project" value="InterPro"/>
</dbReference>
<dbReference type="GO" id="GO:0050136">
    <property type="term" value="F:NADH:ubiquinone reductase (non-electrogenic) activity"/>
    <property type="evidence" value="ECO:0007669"/>
    <property type="project" value="UniProtKB-UniRule"/>
</dbReference>
<dbReference type="GO" id="GO:0048038">
    <property type="term" value="F:quinone binding"/>
    <property type="evidence" value="ECO:0007669"/>
    <property type="project" value="UniProtKB-KW"/>
</dbReference>
<dbReference type="FunFam" id="1.10.645.10:FF:000005">
    <property type="entry name" value="NADH-quinone oxidoreductase subunit D"/>
    <property type="match status" value="1"/>
</dbReference>
<dbReference type="Gene3D" id="1.10.645.10">
    <property type="entry name" value="Cytochrome-c3 Hydrogenase, chain B"/>
    <property type="match status" value="1"/>
</dbReference>
<dbReference type="HAMAP" id="MF_01358">
    <property type="entry name" value="NDH1_NuoD"/>
    <property type="match status" value="1"/>
</dbReference>
<dbReference type="InterPro" id="IPR001135">
    <property type="entry name" value="NADH_Q_OxRdtase_suD"/>
</dbReference>
<dbReference type="InterPro" id="IPR014029">
    <property type="entry name" value="NADH_UbQ_OxRdtase_49kDa_CS"/>
</dbReference>
<dbReference type="InterPro" id="IPR022885">
    <property type="entry name" value="NDH1_su_D/H"/>
</dbReference>
<dbReference type="InterPro" id="IPR029014">
    <property type="entry name" value="NiFe-Hase_large"/>
</dbReference>
<dbReference type="NCBIfam" id="TIGR01962">
    <property type="entry name" value="NuoD"/>
    <property type="match status" value="1"/>
</dbReference>
<dbReference type="NCBIfam" id="NF004739">
    <property type="entry name" value="PRK06075.1"/>
    <property type="match status" value="1"/>
</dbReference>
<dbReference type="PANTHER" id="PTHR11993:SF10">
    <property type="entry name" value="NADH DEHYDROGENASE [UBIQUINONE] IRON-SULFUR PROTEIN 2, MITOCHONDRIAL"/>
    <property type="match status" value="1"/>
</dbReference>
<dbReference type="PANTHER" id="PTHR11993">
    <property type="entry name" value="NADH-UBIQUINONE OXIDOREDUCTASE 49 KDA SUBUNIT"/>
    <property type="match status" value="1"/>
</dbReference>
<dbReference type="Pfam" id="PF00346">
    <property type="entry name" value="Complex1_49kDa"/>
    <property type="match status" value="1"/>
</dbReference>
<dbReference type="SUPFAM" id="SSF56762">
    <property type="entry name" value="HydB/Nqo4-like"/>
    <property type="match status" value="1"/>
</dbReference>
<dbReference type="PROSITE" id="PS00535">
    <property type="entry name" value="COMPLEX1_49K"/>
    <property type="match status" value="1"/>
</dbReference>
<gene>
    <name evidence="1" type="primary">nuoD</name>
    <name type="ordered locus">NMCC_1902</name>
</gene>
<proteinExistence type="inferred from homology"/>
<accession>A9M3D9</accession>
<keyword id="KW-0997">Cell inner membrane</keyword>
<keyword id="KW-1003">Cell membrane</keyword>
<keyword id="KW-0472">Membrane</keyword>
<keyword id="KW-0520">NAD</keyword>
<keyword id="KW-0874">Quinone</keyword>
<keyword id="KW-1278">Translocase</keyword>
<keyword id="KW-0813">Transport</keyword>
<keyword id="KW-0830">Ubiquinone</keyword>
<evidence type="ECO:0000255" key="1">
    <source>
        <dbReference type="HAMAP-Rule" id="MF_01358"/>
    </source>
</evidence>
<organism>
    <name type="scientific">Neisseria meningitidis serogroup C (strain 053442)</name>
    <dbReference type="NCBI Taxonomy" id="374833"/>
    <lineage>
        <taxon>Bacteria</taxon>
        <taxon>Pseudomonadati</taxon>
        <taxon>Pseudomonadota</taxon>
        <taxon>Betaproteobacteria</taxon>
        <taxon>Neisseriales</taxon>
        <taxon>Neisseriaceae</taxon>
        <taxon>Neisseria</taxon>
    </lineage>
</organism>
<sequence>MANKLRNYTINFGPQHPAAHGVLRMILELEGETIVRADPHIGLLHRGTEKLAETKTYLQALPYMDRLDYVSMMVNEQAYCLAVEKLAGIDVPIRAQYIRVMFAEVTRILNHLMGIGSHAFDIGAMTAILYAFRDREELMDLYEAVSGARMHAAYFRPGGVYRDLPDFMPKYESSKFRNAKVLKQLNESREGTMLDFIDAFCERFPKNIDTLETLLTDNRIWKQRTVGIGVVTPERAMQKGFTGVMLRGSGVEWDVRKKQPYEMYDKMDFDIPVGVNGDCYDRYLCRMEEMRQSVRIIKQCSEWLRVNPGPVITTNHKFAPPKRTEMKTGMEDLIHHFKLFTEGMHVPEGETYTAVEHPKGEFGVYIISDGANKPYRLKIRAPGFAHLQGMDEMAKGHMLADVVAIIGTQDIVFGEVDR</sequence>
<protein>
    <recommendedName>
        <fullName evidence="1">NADH-quinone oxidoreductase subunit D</fullName>
        <ecNumber evidence="1">7.1.1.-</ecNumber>
    </recommendedName>
    <alternativeName>
        <fullName evidence="1">NADH dehydrogenase I subunit D</fullName>
    </alternativeName>
    <alternativeName>
        <fullName evidence="1">NDH-1 subunit D</fullName>
    </alternativeName>
</protein>
<name>NUOD_NEIM0</name>
<reference key="1">
    <citation type="journal article" date="2008" name="Genomics">
        <title>Characterization of ST-4821 complex, a unique Neisseria meningitidis clone.</title>
        <authorList>
            <person name="Peng J."/>
            <person name="Yang L."/>
            <person name="Yang F."/>
            <person name="Yang J."/>
            <person name="Yan Y."/>
            <person name="Nie H."/>
            <person name="Zhang X."/>
            <person name="Xiong Z."/>
            <person name="Jiang Y."/>
            <person name="Cheng F."/>
            <person name="Xu X."/>
            <person name="Chen S."/>
            <person name="Sun L."/>
            <person name="Li W."/>
            <person name="Shen Y."/>
            <person name="Shao Z."/>
            <person name="Liang X."/>
            <person name="Xu J."/>
            <person name="Jin Q."/>
        </authorList>
    </citation>
    <scope>NUCLEOTIDE SEQUENCE [LARGE SCALE GENOMIC DNA]</scope>
    <source>
        <strain>053442</strain>
    </source>
</reference>